<comment type="function">
    <text evidence="1">Catalyzes the reversible formation of acyl-phosphate (acyl-PO(4)) from acyl-[acyl-carrier-protein] (acyl-ACP). This enzyme utilizes acyl-ACP as fatty acyl donor, but not acyl-CoA.</text>
</comment>
<comment type="catalytic activity">
    <reaction evidence="1">
        <text>a fatty acyl-[ACP] + phosphate = an acyl phosphate + holo-[ACP]</text>
        <dbReference type="Rhea" id="RHEA:42292"/>
        <dbReference type="Rhea" id="RHEA-COMP:9685"/>
        <dbReference type="Rhea" id="RHEA-COMP:14125"/>
        <dbReference type="ChEBI" id="CHEBI:43474"/>
        <dbReference type="ChEBI" id="CHEBI:59918"/>
        <dbReference type="ChEBI" id="CHEBI:64479"/>
        <dbReference type="ChEBI" id="CHEBI:138651"/>
        <dbReference type="EC" id="2.3.1.274"/>
    </reaction>
</comment>
<comment type="pathway">
    <text evidence="1">Lipid metabolism; phospholipid metabolism.</text>
</comment>
<comment type="subunit">
    <text evidence="1">Homodimer. Probably interacts with PlsY.</text>
</comment>
<comment type="subcellular location">
    <subcellularLocation>
        <location evidence="1">Cytoplasm</location>
    </subcellularLocation>
    <text evidence="1">Associated with the membrane possibly through PlsY.</text>
</comment>
<comment type="similarity">
    <text evidence="1">Belongs to the PlsX family.</text>
</comment>
<gene>
    <name evidence="1" type="primary">plsX</name>
    <name type="ordered locus">Bsph_1516</name>
</gene>
<reference key="1">
    <citation type="journal article" date="2008" name="J. Bacteriol.">
        <title>Complete genome sequence of the mosquitocidal bacterium Bacillus sphaericus C3-41 and comparison with those of closely related Bacillus species.</title>
        <authorList>
            <person name="Hu X."/>
            <person name="Fan W."/>
            <person name="Han B."/>
            <person name="Liu H."/>
            <person name="Zheng D."/>
            <person name="Li Q."/>
            <person name="Dong W."/>
            <person name="Yan J."/>
            <person name="Gao M."/>
            <person name="Berry C."/>
            <person name="Yuan Z."/>
        </authorList>
    </citation>
    <scope>NUCLEOTIDE SEQUENCE [LARGE SCALE GENOMIC DNA]</scope>
    <source>
        <strain>C3-41</strain>
    </source>
</reference>
<sequence>MKLALDGMGGDNAPKSVIEGALLALEQIPNLEIQLYGQQEKLEPFLKQHDRLTIVPCEEVVEGTDDPARAVRRKKDSSMARMMDAVDEGRADACLSAGNTGALMAGGLFKVGRIEGIARPALATTLPTLDGKGFLMLDLGANADARPEHLVPYAIMGDIYAKKVGGLQKPRIGLLNIGTEDKKGNELTKATFDLLKEANLNFIGNVEARDLLEGVADVVVTDGFTGNMVLKSIEGTAGALFSMLKEAFMSSTKTKISAVLMKNNLRDLKHKMDYTEYGGAGLFGLQAPVIKAHGSSNAKAIFSAIRQANTMVEHTVISTITETVRHIEID</sequence>
<feature type="chain" id="PRO_1000089922" description="Phosphate acyltransferase">
    <location>
        <begin position="1"/>
        <end position="330"/>
    </location>
</feature>
<name>PLSX_LYSSC</name>
<organism>
    <name type="scientific">Lysinibacillus sphaericus (strain C3-41)</name>
    <dbReference type="NCBI Taxonomy" id="444177"/>
    <lineage>
        <taxon>Bacteria</taxon>
        <taxon>Bacillati</taxon>
        <taxon>Bacillota</taxon>
        <taxon>Bacilli</taxon>
        <taxon>Bacillales</taxon>
        <taxon>Bacillaceae</taxon>
        <taxon>Lysinibacillus</taxon>
    </lineage>
</organism>
<keyword id="KW-0963">Cytoplasm</keyword>
<keyword id="KW-0444">Lipid biosynthesis</keyword>
<keyword id="KW-0443">Lipid metabolism</keyword>
<keyword id="KW-0594">Phospholipid biosynthesis</keyword>
<keyword id="KW-1208">Phospholipid metabolism</keyword>
<keyword id="KW-0808">Transferase</keyword>
<accession>B1HQG9</accession>
<dbReference type="EC" id="2.3.1.274" evidence="1"/>
<dbReference type="EMBL" id="CP000817">
    <property type="protein sequence ID" value="ACA39116.1"/>
    <property type="molecule type" value="Genomic_DNA"/>
</dbReference>
<dbReference type="RefSeq" id="WP_012293233.1">
    <property type="nucleotide sequence ID" value="NC_010382.1"/>
</dbReference>
<dbReference type="SMR" id="B1HQG9"/>
<dbReference type="EnsemblBacteria" id="ACA39116">
    <property type="protein sequence ID" value="ACA39116"/>
    <property type="gene ID" value="Bsph_1516"/>
</dbReference>
<dbReference type="KEGG" id="lsp:Bsph_1516"/>
<dbReference type="HOGENOM" id="CLU_039379_1_1_9"/>
<dbReference type="UniPathway" id="UPA00085"/>
<dbReference type="Proteomes" id="UP000002164">
    <property type="component" value="Chromosome"/>
</dbReference>
<dbReference type="GO" id="GO:0005737">
    <property type="term" value="C:cytoplasm"/>
    <property type="evidence" value="ECO:0007669"/>
    <property type="project" value="UniProtKB-SubCell"/>
</dbReference>
<dbReference type="GO" id="GO:0043811">
    <property type="term" value="F:phosphate:acyl-[acyl carrier protein] acyltransferase activity"/>
    <property type="evidence" value="ECO:0007669"/>
    <property type="project" value="UniProtKB-UniRule"/>
</dbReference>
<dbReference type="GO" id="GO:0006633">
    <property type="term" value="P:fatty acid biosynthetic process"/>
    <property type="evidence" value="ECO:0007669"/>
    <property type="project" value="UniProtKB-UniRule"/>
</dbReference>
<dbReference type="GO" id="GO:0008654">
    <property type="term" value="P:phospholipid biosynthetic process"/>
    <property type="evidence" value="ECO:0007669"/>
    <property type="project" value="UniProtKB-KW"/>
</dbReference>
<dbReference type="Gene3D" id="3.40.718.10">
    <property type="entry name" value="Isopropylmalate Dehydrogenase"/>
    <property type="match status" value="1"/>
</dbReference>
<dbReference type="HAMAP" id="MF_00019">
    <property type="entry name" value="PlsX"/>
    <property type="match status" value="1"/>
</dbReference>
<dbReference type="InterPro" id="IPR003664">
    <property type="entry name" value="FA_synthesis"/>
</dbReference>
<dbReference type="InterPro" id="IPR012281">
    <property type="entry name" value="Phospholipid_synth_PlsX-like"/>
</dbReference>
<dbReference type="NCBIfam" id="TIGR00182">
    <property type="entry name" value="plsX"/>
    <property type="match status" value="1"/>
</dbReference>
<dbReference type="PANTHER" id="PTHR30100">
    <property type="entry name" value="FATTY ACID/PHOSPHOLIPID SYNTHESIS PROTEIN PLSX"/>
    <property type="match status" value="1"/>
</dbReference>
<dbReference type="PANTHER" id="PTHR30100:SF1">
    <property type="entry name" value="PHOSPHATE ACYLTRANSFERASE"/>
    <property type="match status" value="1"/>
</dbReference>
<dbReference type="Pfam" id="PF02504">
    <property type="entry name" value="FA_synthesis"/>
    <property type="match status" value="1"/>
</dbReference>
<dbReference type="PIRSF" id="PIRSF002465">
    <property type="entry name" value="Phsphlp_syn_PlsX"/>
    <property type="match status" value="1"/>
</dbReference>
<dbReference type="SUPFAM" id="SSF53659">
    <property type="entry name" value="Isocitrate/Isopropylmalate dehydrogenase-like"/>
    <property type="match status" value="1"/>
</dbReference>
<proteinExistence type="inferred from homology"/>
<protein>
    <recommendedName>
        <fullName evidence="1">Phosphate acyltransferase</fullName>
        <ecNumber evidence="1">2.3.1.274</ecNumber>
    </recommendedName>
    <alternativeName>
        <fullName evidence="1">Acyl-ACP phosphotransacylase</fullName>
    </alternativeName>
    <alternativeName>
        <fullName evidence="1">Acyl-[acyl-carrier-protein]--phosphate acyltransferase</fullName>
    </alternativeName>
    <alternativeName>
        <fullName evidence="1">Phosphate-acyl-ACP acyltransferase</fullName>
    </alternativeName>
</protein>
<evidence type="ECO:0000255" key="1">
    <source>
        <dbReference type="HAMAP-Rule" id="MF_00019"/>
    </source>
</evidence>